<organism>
    <name type="scientific">Burkholderia orbicola (strain MC0-3)</name>
    <dbReference type="NCBI Taxonomy" id="406425"/>
    <lineage>
        <taxon>Bacteria</taxon>
        <taxon>Pseudomonadati</taxon>
        <taxon>Pseudomonadota</taxon>
        <taxon>Betaproteobacteria</taxon>
        <taxon>Burkholderiales</taxon>
        <taxon>Burkholderiaceae</taxon>
        <taxon>Burkholderia</taxon>
        <taxon>Burkholderia cepacia complex</taxon>
        <taxon>Burkholderia orbicola</taxon>
    </lineage>
</organism>
<dbReference type="EC" id="6.3.2.4" evidence="2"/>
<dbReference type="EMBL" id="CP000958">
    <property type="protein sequence ID" value="ACA89710.1"/>
    <property type="molecule type" value="Genomic_DNA"/>
</dbReference>
<dbReference type="RefSeq" id="WP_012327854.1">
    <property type="nucleotide sequence ID" value="NC_010508.1"/>
</dbReference>
<dbReference type="SMR" id="B1JV80"/>
<dbReference type="GeneID" id="83047333"/>
<dbReference type="KEGG" id="bcm:Bcenmc03_0532"/>
<dbReference type="HOGENOM" id="CLU_039268_1_2_4"/>
<dbReference type="UniPathway" id="UPA00219"/>
<dbReference type="Proteomes" id="UP000002169">
    <property type="component" value="Chromosome 1"/>
</dbReference>
<dbReference type="GO" id="GO:0005829">
    <property type="term" value="C:cytosol"/>
    <property type="evidence" value="ECO:0007669"/>
    <property type="project" value="TreeGrafter"/>
</dbReference>
<dbReference type="GO" id="GO:0005524">
    <property type="term" value="F:ATP binding"/>
    <property type="evidence" value="ECO:0007669"/>
    <property type="project" value="UniProtKB-KW"/>
</dbReference>
<dbReference type="GO" id="GO:0008716">
    <property type="term" value="F:D-alanine-D-alanine ligase activity"/>
    <property type="evidence" value="ECO:0007669"/>
    <property type="project" value="UniProtKB-UniRule"/>
</dbReference>
<dbReference type="GO" id="GO:0046872">
    <property type="term" value="F:metal ion binding"/>
    <property type="evidence" value="ECO:0007669"/>
    <property type="project" value="UniProtKB-KW"/>
</dbReference>
<dbReference type="GO" id="GO:0071555">
    <property type="term" value="P:cell wall organization"/>
    <property type="evidence" value="ECO:0007669"/>
    <property type="project" value="UniProtKB-KW"/>
</dbReference>
<dbReference type="GO" id="GO:0009252">
    <property type="term" value="P:peptidoglycan biosynthetic process"/>
    <property type="evidence" value="ECO:0007669"/>
    <property type="project" value="UniProtKB-UniRule"/>
</dbReference>
<dbReference type="GO" id="GO:0008360">
    <property type="term" value="P:regulation of cell shape"/>
    <property type="evidence" value="ECO:0007669"/>
    <property type="project" value="UniProtKB-KW"/>
</dbReference>
<dbReference type="FunFam" id="3.30.1490.20:FF:000007">
    <property type="entry name" value="D-alanine--D-alanine ligase"/>
    <property type="match status" value="1"/>
</dbReference>
<dbReference type="FunFam" id="3.30.470.20:FF:000008">
    <property type="entry name" value="D-alanine--D-alanine ligase"/>
    <property type="match status" value="1"/>
</dbReference>
<dbReference type="FunFam" id="3.40.50.20:FF:000013">
    <property type="entry name" value="D-alanine--D-alanine ligase"/>
    <property type="match status" value="1"/>
</dbReference>
<dbReference type="Gene3D" id="3.40.50.20">
    <property type="match status" value="1"/>
</dbReference>
<dbReference type="Gene3D" id="3.30.1490.20">
    <property type="entry name" value="ATP-grasp fold, A domain"/>
    <property type="match status" value="1"/>
</dbReference>
<dbReference type="Gene3D" id="3.30.470.20">
    <property type="entry name" value="ATP-grasp fold, B domain"/>
    <property type="match status" value="1"/>
</dbReference>
<dbReference type="HAMAP" id="MF_00047">
    <property type="entry name" value="Dala_Dala_lig"/>
    <property type="match status" value="1"/>
</dbReference>
<dbReference type="InterPro" id="IPR011761">
    <property type="entry name" value="ATP-grasp"/>
</dbReference>
<dbReference type="InterPro" id="IPR013815">
    <property type="entry name" value="ATP_grasp_subdomain_1"/>
</dbReference>
<dbReference type="InterPro" id="IPR000291">
    <property type="entry name" value="D-Ala_lig_Van_CS"/>
</dbReference>
<dbReference type="InterPro" id="IPR005905">
    <property type="entry name" value="D_ala_D_ala"/>
</dbReference>
<dbReference type="InterPro" id="IPR011095">
    <property type="entry name" value="Dala_Dala_lig_C"/>
</dbReference>
<dbReference type="InterPro" id="IPR011127">
    <property type="entry name" value="Dala_Dala_lig_N"/>
</dbReference>
<dbReference type="InterPro" id="IPR016185">
    <property type="entry name" value="PreATP-grasp_dom_sf"/>
</dbReference>
<dbReference type="NCBIfam" id="TIGR01205">
    <property type="entry name" value="D_ala_D_alaTIGR"/>
    <property type="match status" value="1"/>
</dbReference>
<dbReference type="NCBIfam" id="NF002378">
    <property type="entry name" value="PRK01372.1"/>
    <property type="match status" value="1"/>
</dbReference>
<dbReference type="PANTHER" id="PTHR23132">
    <property type="entry name" value="D-ALANINE--D-ALANINE LIGASE"/>
    <property type="match status" value="1"/>
</dbReference>
<dbReference type="PANTHER" id="PTHR23132:SF23">
    <property type="entry name" value="D-ALANINE--D-ALANINE LIGASE B"/>
    <property type="match status" value="1"/>
</dbReference>
<dbReference type="Pfam" id="PF07478">
    <property type="entry name" value="Dala_Dala_lig_C"/>
    <property type="match status" value="1"/>
</dbReference>
<dbReference type="Pfam" id="PF01820">
    <property type="entry name" value="Dala_Dala_lig_N"/>
    <property type="match status" value="1"/>
</dbReference>
<dbReference type="PIRSF" id="PIRSF039102">
    <property type="entry name" value="Ddl/VanB"/>
    <property type="match status" value="1"/>
</dbReference>
<dbReference type="SUPFAM" id="SSF56059">
    <property type="entry name" value="Glutathione synthetase ATP-binding domain-like"/>
    <property type="match status" value="1"/>
</dbReference>
<dbReference type="SUPFAM" id="SSF52440">
    <property type="entry name" value="PreATP-grasp domain"/>
    <property type="match status" value="1"/>
</dbReference>
<dbReference type="PROSITE" id="PS50975">
    <property type="entry name" value="ATP_GRASP"/>
    <property type="match status" value="1"/>
</dbReference>
<dbReference type="PROSITE" id="PS00843">
    <property type="entry name" value="DALA_DALA_LIGASE_1"/>
    <property type="match status" value="1"/>
</dbReference>
<dbReference type="PROSITE" id="PS00844">
    <property type="entry name" value="DALA_DALA_LIGASE_2"/>
    <property type="match status" value="1"/>
</dbReference>
<comment type="function">
    <text evidence="2">Cell wall formation.</text>
</comment>
<comment type="catalytic activity">
    <reaction evidence="2">
        <text>2 D-alanine + ATP = D-alanyl-D-alanine + ADP + phosphate + H(+)</text>
        <dbReference type="Rhea" id="RHEA:11224"/>
        <dbReference type="ChEBI" id="CHEBI:15378"/>
        <dbReference type="ChEBI" id="CHEBI:30616"/>
        <dbReference type="ChEBI" id="CHEBI:43474"/>
        <dbReference type="ChEBI" id="CHEBI:57416"/>
        <dbReference type="ChEBI" id="CHEBI:57822"/>
        <dbReference type="ChEBI" id="CHEBI:456216"/>
        <dbReference type="EC" id="6.3.2.4"/>
    </reaction>
</comment>
<comment type="cofactor">
    <cofactor evidence="1">
        <name>Mg(2+)</name>
        <dbReference type="ChEBI" id="CHEBI:18420"/>
    </cofactor>
    <cofactor evidence="1">
        <name>Mn(2+)</name>
        <dbReference type="ChEBI" id="CHEBI:29035"/>
    </cofactor>
    <text evidence="1">Binds 2 magnesium or manganese ions per subunit.</text>
</comment>
<comment type="pathway">
    <text evidence="2">Cell wall biogenesis; peptidoglycan biosynthesis.</text>
</comment>
<comment type="subcellular location">
    <subcellularLocation>
        <location evidence="2">Cytoplasm</location>
    </subcellularLocation>
</comment>
<comment type="similarity">
    <text evidence="2">Belongs to the D-alanine--D-alanine ligase family.</text>
</comment>
<keyword id="KW-0067">ATP-binding</keyword>
<keyword id="KW-0133">Cell shape</keyword>
<keyword id="KW-0961">Cell wall biogenesis/degradation</keyword>
<keyword id="KW-0963">Cytoplasm</keyword>
<keyword id="KW-0436">Ligase</keyword>
<keyword id="KW-0460">Magnesium</keyword>
<keyword id="KW-0464">Manganese</keyword>
<keyword id="KW-0479">Metal-binding</keyword>
<keyword id="KW-0547">Nucleotide-binding</keyword>
<keyword id="KW-0573">Peptidoglycan synthesis</keyword>
<proteinExistence type="inferred from homology"/>
<sequence length="313" mass="33210">MSGIDPKRFGKVAVLFGGESAEREVSLTSGRLVLQGLRDAGVDAHPFDPAERPLSALKDEGFVRAFNALHGGYGENGQIQGALDFYGIRYTGSGVLGSALGLDKFRTKLVWQQTGVPTPPFETVMRGDDLAARATDIVAKLGLPLFVKPASEGSSVAVLKVKTADALPAALAEAATHDKIVIVEKSIEGGGEYTACIAGDLDLPLIKIVPAGEFYDYHAKYVADDTQYLIPCGLPAEQEAELKRIARRAFAVLGCTDWGRADFMLDAAGNAYFLEVNTAPGMTDHSLPPKAARAVGIGYSELVVKVLSLTLND</sequence>
<accession>B1JV80</accession>
<name>DDL_BURO0</name>
<reference key="1">
    <citation type="submission" date="2008-02" db="EMBL/GenBank/DDBJ databases">
        <title>Complete sequence of chromosome 1 of Burkholderia cenocepacia MC0-3.</title>
        <authorList>
            <person name="Copeland A."/>
            <person name="Lucas S."/>
            <person name="Lapidus A."/>
            <person name="Barry K."/>
            <person name="Bruce D."/>
            <person name="Goodwin L."/>
            <person name="Glavina del Rio T."/>
            <person name="Dalin E."/>
            <person name="Tice H."/>
            <person name="Pitluck S."/>
            <person name="Chain P."/>
            <person name="Malfatti S."/>
            <person name="Shin M."/>
            <person name="Vergez L."/>
            <person name="Schmutz J."/>
            <person name="Larimer F."/>
            <person name="Land M."/>
            <person name="Hauser L."/>
            <person name="Kyrpides N."/>
            <person name="Mikhailova N."/>
            <person name="Tiedje J."/>
            <person name="Richardson P."/>
        </authorList>
    </citation>
    <scope>NUCLEOTIDE SEQUENCE [LARGE SCALE GENOMIC DNA]</scope>
    <source>
        <strain>MC0-3</strain>
    </source>
</reference>
<feature type="chain" id="PRO_0000341069" description="D-alanine--D-alanine ligase">
    <location>
        <begin position="1"/>
        <end position="313"/>
    </location>
</feature>
<feature type="domain" description="ATP-grasp" evidence="2">
    <location>
        <begin position="108"/>
        <end position="308"/>
    </location>
</feature>
<feature type="binding site" evidence="2">
    <location>
        <begin position="138"/>
        <end position="193"/>
    </location>
    <ligand>
        <name>ATP</name>
        <dbReference type="ChEBI" id="CHEBI:30616"/>
    </ligand>
</feature>
<feature type="binding site" evidence="2">
    <location>
        <position position="262"/>
    </location>
    <ligand>
        <name>Mg(2+)</name>
        <dbReference type="ChEBI" id="CHEBI:18420"/>
        <label>1</label>
    </ligand>
</feature>
<feature type="binding site" evidence="2">
    <location>
        <position position="275"/>
    </location>
    <ligand>
        <name>Mg(2+)</name>
        <dbReference type="ChEBI" id="CHEBI:18420"/>
        <label>1</label>
    </ligand>
</feature>
<feature type="binding site" evidence="2">
    <location>
        <position position="275"/>
    </location>
    <ligand>
        <name>Mg(2+)</name>
        <dbReference type="ChEBI" id="CHEBI:18420"/>
        <label>2</label>
    </ligand>
</feature>
<feature type="binding site" evidence="2">
    <location>
        <position position="277"/>
    </location>
    <ligand>
        <name>Mg(2+)</name>
        <dbReference type="ChEBI" id="CHEBI:18420"/>
        <label>2</label>
    </ligand>
</feature>
<gene>
    <name evidence="2" type="primary">ddl</name>
    <name type="ordered locus">Bcenmc03_0532</name>
</gene>
<evidence type="ECO:0000250" key="1"/>
<evidence type="ECO:0000255" key="2">
    <source>
        <dbReference type="HAMAP-Rule" id="MF_00047"/>
    </source>
</evidence>
<protein>
    <recommendedName>
        <fullName evidence="2">D-alanine--D-alanine ligase</fullName>
        <ecNumber evidence="2">6.3.2.4</ecNumber>
    </recommendedName>
    <alternativeName>
        <fullName evidence="2">D-Ala-D-Ala ligase</fullName>
    </alternativeName>
    <alternativeName>
        <fullName evidence="2">D-alanylalanine synthetase</fullName>
    </alternativeName>
</protein>